<sequence length="1174" mass="131687">MSFQTLERERTFKNPPKDGTSFPDLQKAVKPHVDSFNALTNAGLLNYAVKEIGEKCAFDSITQEEGGALKFGNKISFRVDEVQIAKPMLSSRERSSINRKVYPAEARERLTTYKSRLVLKFSWSVNGGPRQSEMREVGMIPIMVRSNRCHLEGLSPAELIAHKEESEEMGGYFIVNGIEKLIRMLILPKRNHPTAIIRPSFANRGTSYSQYGLSIRCVRPDQSSLTNTLHYLNNGVTMFRFHWRKNEYLIPSMMILKALLETSDKEIFEGIVGKDLGNTFLTDRVELMLRAYKSYGLYSQTETLQYLGSKFRVVLGVAEDLTDVEVGRFLLQKVVLVHLREAKDKFRLLLFMIRKLYALVAGECCADNPDSPQHQEILLGGFLYGQILKEKIEDWLNSIRAQINLDVRRSAPGVDFSDRKYLTRVFSKINNDIGTKLQYFLSTGNLVSNTGLDLQQATGYTVVAEKLNFYRFLSHFRMVHRGAFFAELKTTTVRKLLPEAWGFMCPVHTPDGSPCGLLNHLARKCEIVTHPSDVSQIPSLLLSLGVDPPSVVGHESGWGCVQLDGKIVGWCTYKLAKHVADVLRLMKIEYAVKLRNGTATEPAKVPLDLEIGYVPPSHNGQYPGLYLFSNPARMVRPVKHISTGELDMLGPFEQVYMDIACFPKEIVPKVSTHVEYSPTNVLSIVANMTPFSDFNQSPRNMYQCQMGKQTMGTPGTALRYRTDNKLYRLQTGQTPVVRPKLHNTYGLDHYPNGTNAVVAVISYTGYDMEDAMILNKSAHERGFGYGTVYKGESFDLSQKRRRGEPVVHHFGFAPGSTPRREWLQKLDADGLPFIGIKLEDGDPIVAYYDESTGQNFIETYHGTEPGFVDEVRLLGNDVGDSECQQIHVKLRITRSPIIGDKFSSRHGQKGICSQKWPTVDMPFTESGMQPDIIINPHAFPSRMTIGMFIESLAGKAGACHGLAQDSTPFIYSEQQTAADYFGEQLVKAGYNYHGNEPMYSGITGQEMKADIYIGVVYYQRLRHMVSDKFQVRTTGPIHNLTRQPVKGRKRAGGIRFGEMERDAVIGHGTSFLMQDRLMNCSDYAQSWVCRDCGSIISIMSTISMNGVGSASEVRCRSCAKPALGLEDTSDIWQDGSGKKFVGGTNTTLIALPSVFNYLTAELTAMNIKMMLEVK</sequence>
<reference key="1">
    <citation type="journal article" date="2002" name="Nature">
        <title>The genome sequence of Schizosaccharomyces pombe.</title>
        <authorList>
            <person name="Wood V."/>
            <person name="Gwilliam R."/>
            <person name="Rajandream M.A."/>
            <person name="Lyne M.H."/>
            <person name="Lyne R."/>
            <person name="Stewart A."/>
            <person name="Sgouros J.G."/>
            <person name="Peat N."/>
            <person name="Hayles J."/>
            <person name="Baker S.G."/>
            <person name="Basham D."/>
            <person name="Bowman S."/>
            <person name="Brooks K."/>
            <person name="Brown D."/>
            <person name="Brown S."/>
            <person name="Chillingworth T."/>
            <person name="Churcher C.M."/>
            <person name="Collins M."/>
            <person name="Connor R."/>
            <person name="Cronin A."/>
            <person name="Davis P."/>
            <person name="Feltwell T."/>
            <person name="Fraser A."/>
            <person name="Gentles S."/>
            <person name="Goble A."/>
            <person name="Hamlin N."/>
            <person name="Harris D.E."/>
            <person name="Hidalgo J."/>
            <person name="Hodgson G."/>
            <person name="Holroyd S."/>
            <person name="Hornsby T."/>
            <person name="Howarth S."/>
            <person name="Huckle E.J."/>
            <person name="Hunt S."/>
            <person name="Jagels K."/>
            <person name="James K.D."/>
            <person name="Jones L."/>
            <person name="Jones M."/>
            <person name="Leather S."/>
            <person name="McDonald S."/>
            <person name="McLean J."/>
            <person name="Mooney P."/>
            <person name="Moule S."/>
            <person name="Mungall K.L."/>
            <person name="Murphy L.D."/>
            <person name="Niblett D."/>
            <person name="Odell C."/>
            <person name="Oliver K."/>
            <person name="O'Neil S."/>
            <person name="Pearson D."/>
            <person name="Quail M.A."/>
            <person name="Rabbinowitsch E."/>
            <person name="Rutherford K.M."/>
            <person name="Rutter S."/>
            <person name="Saunders D."/>
            <person name="Seeger K."/>
            <person name="Sharp S."/>
            <person name="Skelton J."/>
            <person name="Simmonds M.N."/>
            <person name="Squares R."/>
            <person name="Squares S."/>
            <person name="Stevens K."/>
            <person name="Taylor K."/>
            <person name="Taylor R.G."/>
            <person name="Tivey A."/>
            <person name="Walsh S.V."/>
            <person name="Warren T."/>
            <person name="Whitehead S."/>
            <person name="Woodward J.R."/>
            <person name="Volckaert G."/>
            <person name="Aert R."/>
            <person name="Robben J."/>
            <person name="Grymonprez B."/>
            <person name="Weltjens I."/>
            <person name="Vanstreels E."/>
            <person name="Rieger M."/>
            <person name="Schaefer M."/>
            <person name="Mueller-Auer S."/>
            <person name="Gabel C."/>
            <person name="Fuchs M."/>
            <person name="Duesterhoeft A."/>
            <person name="Fritzc C."/>
            <person name="Holzer E."/>
            <person name="Moestl D."/>
            <person name="Hilbert H."/>
            <person name="Borzym K."/>
            <person name="Langer I."/>
            <person name="Beck A."/>
            <person name="Lehrach H."/>
            <person name="Reinhardt R."/>
            <person name="Pohl T.M."/>
            <person name="Eger P."/>
            <person name="Zimmermann W."/>
            <person name="Wedler H."/>
            <person name="Wambutt R."/>
            <person name="Purnelle B."/>
            <person name="Goffeau A."/>
            <person name="Cadieu E."/>
            <person name="Dreano S."/>
            <person name="Gloux S."/>
            <person name="Lelaure V."/>
            <person name="Mottier S."/>
            <person name="Galibert F."/>
            <person name="Aves S.J."/>
            <person name="Xiang Z."/>
            <person name="Hunt C."/>
            <person name="Moore K."/>
            <person name="Hurst S.M."/>
            <person name="Lucas M."/>
            <person name="Rochet M."/>
            <person name="Gaillardin C."/>
            <person name="Tallada V.A."/>
            <person name="Garzon A."/>
            <person name="Thode G."/>
            <person name="Daga R.R."/>
            <person name="Cruzado L."/>
            <person name="Jimenez J."/>
            <person name="Sanchez M."/>
            <person name="del Rey F."/>
            <person name="Benito J."/>
            <person name="Dominguez A."/>
            <person name="Revuelta J.L."/>
            <person name="Moreno S."/>
            <person name="Armstrong J."/>
            <person name="Forsburg S.L."/>
            <person name="Cerutti L."/>
            <person name="Lowe T."/>
            <person name="McCombie W.R."/>
            <person name="Paulsen I."/>
            <person name="Potashkin J."/>
            <person name="Shpakovski G.V."/>
            <person name="Ussery D."/>
            <person name="Barrell B.G."/>
            <person name="Nurse P."/>
        </authorList>
    </citation>
    <scope>NUCLEOTIDE SEQUENCE [LARGE SCALE GENOMIC DNA]</scope>
    <source>
        <strain>972 / ATCC 24843</strain>
    </source>
</reference>
<organism>
    <name type="scientific">Schizosaccharomyces pombe (strain 972 / ATCC 24843)</name>
    <name type="common">Fission yeast</name>
    <dbReference type="NCBI Taxonomy" id="284812"/>
    <lineage>
        <taxon>Eukaryota</taxon>
        <taxon>Fungi</taxon>
        <taxon>Dikarya</taxon>
        <taxon>Ascomycota</taxon>
        <taxon>Taphrinomycotina</taxon>
        <taxon>Schizosaccharomycetes</taxon>
        <taxon>Schizosaccharomycetales</taxon>
        <taxon>Schizosaccharomycetaceae</taxon>
        <taxon>Schizosaccharomyces</taxon>
    </lineage>
</organism>
<proteinExistence type="evidence at protein level"/>
<evidence type="ECO:0000250" key="1">
    <source>
        <dbReference type="UniProtKB" id="P22138"/>
    </source>
</evidence>
<evidence type="ECO:0000256" key="2">
    <source>
        <dbReference type="SAM" id="MobiDB-lite"/>
    </source>
</evidence>
<evidence type="ECO:0000305" key="3"/>
<keyword id="KW-0002">3D-structure</keyword>
<keyword id="KW-0240">DNA-directed RNA polymerase</keyword>
<keyword id="KW-0479">Metal-binding</keyword>
<keyword id="KW-0548">Nucleotidyltransferase</keyword>
<keyword id="KW-0539">Nucleus</keyword>
<keyword id="KW-1185">Reference proteome</keyword>
<keyword id="KW-0804">Transcription</keyword>
<keyword id="KW-0808">Transferase</keyword>
<keyword id="KW-0862">Zinc</keyword>
<keyword id="KW-0863">Zinc-finger</keyword>
<protein>
    <recommendedName>
        <fullName>Probable DNA-directed RNA polymerase I subunit RPA2</fullName>
        <ecNumber evidence="1">2.7.7.6</ecNumber>
    </recommendedName>
    <alternativeName>
        <fullName>DNA-directed RNA polymerase I polypeptide 2</fullName>
        <shortName>RNA polymerase I subunit 2</shortName>
    </alternativeName>
</protein>
<gene>
    <name type="primary">rpa2</name>
    <name type="ORF">SPBP23A10.07</name>
</gene>
<name>RPA2_SCHPO</name>
<comment type="function">
    <text evidence="1">DNA-dependent RNA polymerase catalyzes the transcription of DNA into RNA using the four ribonucleoside triphosphates as substrates. Second largest core component of RNA polymerase I which synthesizes ribosomal RNA precursors. Proposed to contribute to the polymerase catalytic activity and forms the polymerase active center together with the largest subunit. Pol I is composed of mobile elements and RPA2 is part of the core element with the central large cleft and probably a clamp element that moves to open and close the cleft (By similarity).</text>
</comment>
<comment type="catalytic activity">
    <reaction evidence="1">
        <text>RNA(n) + a ribonucleoside 5'-triphosphate = RNA(n+1) + diphosphate</text>
        <dbReference type="Rhea" id="RHEA:21248"/>
        <dbReference type="Rhea" id="RHEA-COMP:14527"/>
        <dbReference type="Rhea" id="RHEA-COMP:17342"/>
        <dbReference type="ChEBI" id="CHEBI:33019"/>
        <dbReference type="ChEBI" id="CHEBI:61557"/>
        <dbReference type="ChEBI" id="CHEBI:140395"/>
        <dbReference type="EC" id="2.7.7.6"/>
    </reaction>
    <physiologicalReaction direction="left-to-right" evidence="1">
        <dbReference type="Rhea" id="RHEA:21249"/>
    </physiologicalReaction>
</comment>
<comment type="subunit">
    <text evidence="1">Component of the RNA polymerase I (Pol I) complex consisting of 14 subunits.</text>
</comment>
<comment type="subcellular location">
    <subcellularLocation>
        <location evidence="1">Nucleus</location>
        <location evidence="1">Nucleolus</location>
    </subcellularLocation>
</comment>
<comment type="similarity">
    <text evidence="3">Belongs to the RNA polymerase beta chain family.</text>
</comment>
<feature type="chain" id="PRO_0000048079" description="Probable DNA-directed RNA polymerase I subunit RPA2">
    <location>
        <begin position="1"/>
        <end position="1174"/>
    </location>
</feature>
<feature type="zinc finger region" description="C4-type" evidence="1">
    <location>
        <begin position="1089"/>
        <end position="1118"/>
    </location>
</feature>
<feature type="region of interest" description="Disordered" evidence="2">
    <location>
        <begin position="1"/>
        <end position="23"/>
    </location>
</feature>
<feature type="compositionally biased region" description="Basic and acidic residues" evidence="2">
    <location>
        <begin position="1"/>
        <end position="16"/>
    </location>
</feature>
<dbReference type="EC" id="2.7.7.6" evidence="1"/>
<dbReference type="EMBL" id="CU329671">
    <property type="protein sequence ID" value="CAB66435.2"/>
    <property type="molecule type" value="Genomic_DNA"/>
</dbReference>
<dbReference type="PIR" id="T50394">
    <property type="entry name" value="T50394"/>
</dbReference>
<dbReference type="RefSeq" id="NP_595819.2">
    <property type="nucleotide sequence ID" value="NM_001021723.3"/>
</dbReference>
<dbReference type="PDB" id="7AOC">
    <property type="method" value="EM"/>
    <property type="resolution" value="3.84 A"/>
    <property type="chains" value="B=1-1174"/>
</dbReference>
<dbReference type="PDB" id="7AOD">
    <property type="method" value="EM"/>
    <property type="resolution" value="4.50 A"/>
    <property type="chains" value="B/N=1-1174"/>
</dbReference>
<dbReference type="PDB" id="7AOE">
    <property type="method" value="EM"/>
    <property type="resolution" value="3.90 A"/>
    <property type="chains" value="B=1-1174"/>
</dbReference>
<dbReference type="PDBsum" id="7AOC"/>
<dbReference type="PDBsum" id="7AOD"/>
<dbReference type="PDBsum" id="7AOE"/>
<dbReference type="EMDB" id="EMD-11840"/>
<dbReference type="EMDB" id="EMD-11841"/>
<dbReference type="EMDB" id="EMD-11842"/>
<dbReference type="SMR" id="Q9P7X8"/>
<dbReference type="BioGRID" id="277793">
    <property type="interactions" value="14"/>
</dbReference>
<dbReference type="ComplexPortal" id="CPX-8907">
    <property type="entry name" value="DNA-directed RNA polymerase I complex"/>
</dbReference>
<dbReference type="FunCoup" id="Q9P7X8">
    <property type="interactions" value="396"/>
</dbReference>
<dbReference type="IntAct" id="Q9P7X8">
    <property type="interactions" value="1"/>
</dbReference>
<dbReference type="STRING" id="284812.Q9P7X8"/>
<dbReference type="iPTMnet" id="Q9P7X8"/>
<dbReference type="PaxDb" id="4896-SPBP23A10.07.1"/>
<dbReference type="EnsemblFungi" id="SPBP23A10.07.1">
    <property type="protein sequence ID" value="SPBP23A10.07.1:pep"/>
    <property type="gene ID" value="SPBP23A10.07"/>
</dbReference>
<dbReference type="GeneID" id="2541280"/>
<dbReference type="KEGG" id="spo:2541280"/>
<dbReference type="PomBase" id="SPBP23A10.07">
    <property type="gene designation" value="rpa2"/>
</dbReference>
<dbReference type="VEuPathDB" id="FungiDB:SPBP23A10.07"/>
<dbReference type="eggNOG" id="KOG0216">
    <property type="taxonomic scope" value="Eukaryota"/>
</dbReference>
<dbReference type="HOGENOM" id="CLU_000524_5_1_1"/>
<dbReference type="InParanoid" id="Q9P7X8"/>
<dbReference type="OMA" id="FFGVVHY"/>
<dbReference type="PhylomeDB" id="Q9P7X8"/>
<dbReference type="Reactome" id="R-SPO-73762">
    <property type="pathway name" value="RNA Polymerase I Transcription Initiation"/>
</dbReference>
<dbReference type="Reactome" id="R-SPO-73772">
    <property type="pathway name" value="RNA Polymerase I Promoter Escape"/>
</dbReference>
<dbReference type="PRO" id="PR:Q9P7X8"/>
<dbReference type="Proteomes" id="UP000002485">
    <property type="component" value="Chromosome II"/>
</dbReference>
<dbReference type="GO" id="GO:0005739">
    <property type="term" value="C:mitochondrion"/>
    <property type="evidence" value="ECO:0007669"/>
    <property type="project" value="GOC"/>
</dbReference>
<dbReference type="GO" id="GO:0005736">
    <property type="term" value="C:RNA polymerase I complex"/>
    <property type="evidence" value="ECO:0000314"/>
    <property type="project" value="PomBase"/>
</dbReference>
<dbReference type="GO" id="GO:0003677">
    <property type="term" value="F:DNA binding"/>
    <property type="evidence" value="ECO:0007669"/>
    <property type="project" value="InterPro"/>
</dbReference>
<dbReference type="GO" id="GO:0003899">
    <property type="term" value="F:DNA-directed RNA polymerase activity"/>
    <property type="evidence" value="ECO:0007669"/>
    <property type="project" value="UniProtKB-EC"/>
</dbReference>
<dbReference type="GO" id="GO:0032549">
    <property type="term" value="F:ribonucleoside binding"/>
    <property type="evidence" value="ECO:0007669"/>
    <property type="project" value="InterPro"/>
</dbReference>
<dbReference type="GO" id="GO:0008270">
    <property type="term" value="F:zinc ion binding"/>
    <property type="evidence" value="ECO:0007669"/>
    <property type="project" value="UniProtKB-KW"/>
</dbReference>
<dbReference type="GO" id="GO:0006362">
    <property type="term" value="P:transcription elongation by RNA polymerase I"/>
    <property type="evidence" value="ECO:0000269"/>
    <property type="project" value="PomBase"/>
</dbReference>
<dbReference type="CDD" id="cd00653">
    <property type="entry name" value="RNA_pol_B_RPB2"/>
    <property type="match status" value="1"/>
</dbReference>
<dbReference type="FunFam" id="2.40.270.10:FF:000006">
    <property type="entry name" value="DNA-directed RNA polymerase subunit beta"/>
    <property type="match status" value="1"/>
</dbReference>
<dbReference type="FunFam" id="2.40.270.10:FF:000011">
    <property type="entry name" value="DNA-directed RNA polymerase subunit beta"/>
    <property type="match status" value="1"/>
</dbReference>
<dbReference type="FunFam" id="2.40.50.150:FF:000004">
    <property type="entry name" value="DNA-directed RNA polymerase subunit beta"/>
    <property type="match status" value="1"/>
</dbReference>
<dbReference type="FunFam" id="3.90.1100.10:FF:000008">
    <property type="entry name" value="DNA-directed RNA polymerase subunit beta"/>
    <property type="match status" value="1"/>
</dbReference>
<dbReference type="FunFam" id="3.90.1100.10:FF:000016">
    <property type="entry name" value="DNA-directed RNA polymerase subunit beta"/>
    <property type="match status" value="1"/>
</dbReference>
<dbReference type="FunFam" id="3.90.1110.10:FF:000007">
    <property type="entry name" value="DNA-directed RNA polymerase subunit beta"/>
    <property type="match status" value="1"/>
</dbReference>
<dbReference type="Gene3D" id="2.40.50.150">
    <property type="match status" value="1"/>
</dbReference>
<dbReference type="Gene3D" id="3.90.1100.10">
    <property type="match status" value="2"/>
</dbReference>
<dbReference type="Gene3D" id="2.40.270.10">
    <property type="entry name" value="DNA-directed RNA polymerase, subunit 2, domain 6"/>
    <property type="match status" value="1"/>
</dbReference>
<dbReference type="Gene3D" id="3.90.1800.10">
    <property type="entry name" value="RNA polymerase alpha subunit dimerisation domain"/>
    <property type="match status" value="1"/>
</dbReference>
<dbReference type="Gene3D" id="3.90.1110.10">
    <property type="entry name" value="RNA polymerase Rpb2, domain 2"/>
    <property type="match status" value="1"/>
</dbReference>
<dbReference type="InterPro" id="IPR015712">
    <property type="entry name" value="DNA-dir_RNA_pol_su2"/>
</dbReference>
<dbReference type="InterPro" id="IPR007120">
    <property type="entry name" value="DNA-dir_RNAP_su2_dom"/>
</dbReference>
<dbReference type="InterPro" id="IPR037033">
    <property type="entry name" value="DNA-dir_RNAP_su2_hyb_sf"/>
</dbReference>
<dbReference type="InterPro" id="IPR007121">
    <property type="entry name" value="RNA_pol_bsu_CS"/>
</dbReference>
<dbReference type="InterPro" id="IPR007644">
    <property type="entry name" value="RNA_pol_bsu_protrusion"/>
</dbReference>
<dbReference type="InterPro" id="IPR007642">
    <property type="entry name" value="RNA_pol_Rpb2_2"/>
</dbReference>
<dbReference type="InterPro" id="IPR037034">
    <property type="entry name" value="RNA_pol_Rpb2_2_sf"/>
</dbReference>
<dbReference type="InterPro" id="IPR007645">
    <property type="entry name" value="RNA_pol_Rpb2_3"/>
</dbReference>
<dbReference type="InterPro" id="IPR007641">
    <property type="entry name" value="RNA_pol_Rpb2_7"/>
</dbReference>
<dbReference type="InterPro" id="IPR014724">
    <property type="entry name" value="RNA_pol_RPB2_OB-fold"/>
</dbReference>
<dbReference type="InterPro" id="IPR009674">
    <property type="entry name" value="Rpa2_dom_4"/>
</dbReference>
<dbReference type="PANTHER" id="PTHR20856">
    <property type="entry name" value="DNA-DIRECTED RNA POLYMERASE I SUBUNIT 2"/>
    <property type="match status" value="1"/>
</dbReference>
<dbReference type="Pfam" id="PF06883">
    <property type="entry name" value="RNA_pol_Rpa2_4"/>
    <property type="match status" value="1"/>
</dbReference>
<dbReference type="Pfam" id="PF04563">
    <property type="entry name" value="RNA_pol_Rpb2_1"/>
    <property type="match status" value="1"/>
</dbReference>
<dbReference type="Pfam" id="PF04561">
    <property type="entry name" value="RNA_pol_Rpb2_2"/>
    <property type="match status" value="1"/>
</dbReference>
<dbReference type="Pfam" id="PF04565">
    <property type="entry name" value="RNA_pol_Rpb2_3"/>
    <property type="match status" value="1"/>
</dbReference>
<dbReference type="Pfam" id="PF00562">
    <property type="entry name" value="RNA_pol_Rpb2_6"/>
    <property type="match status" value="1"/>
</dbReference>
<dbReference type="Pfam" id="PF04560">
    <property type="entry name" value="RNA_pol_Rpb2_7"/>
    <property type="match status" value="1"/>
</dbReference>
<dbReference type="SUPFAM" id="SSF64484">
    <property type="entry name" value="beta and beta-prime subunits of DNA dependent RNA-polymerase"/>
    <property type="match status" value="1"/>
</dbReference>
<dbReference type="PROSITE" id="PS01166">
    <property type="entry name" value="RNA_POL_BETA"/>
    <property type="match status" value="1"/>
</dbReference>
<accession>Q9P7X8</accession>